<evidence type="ECO:0000255" key="1">
    <source>
        <dbReference type="HAMAP-Rule" id="MF_00624"/>
    </source>
</evidence>
<organism>
    <name type="scientific">Vibrio vulnificus (strain CMCP6)</name>
    <dbReference type="NCBI Taxonomy" id="216895"/>
    <lineage>
        <taxon>Bacteria</taxon>
        <taxon>Pseudomonadati</taxon>
        <taxon>Pseudomonadota</taxon>
        <taxon>Gammaproteobacteria</taxon>
        <taxon>Vibrionales</taxon>
        <taxon>Vibrionaceae</taxon>
        <taxon>Vibrio</taxon>
    </lineage>
</organism>
<accession>Q8DAR1</accession>
<comment type="function">
    <text evidence="1">Involved in the biosynthesis of ADP-glucose, a building block required for the elongation reactions to produce glycogen. Catalyzes the reaction between ATP and alpha-D-glucose 1-phosphate (G1P) to produce pyrophosphate and ADP-Glc.</text>
</comment>
<comment type="catalytic activity">
    <reaction evidence="1">
        <text>alpha-D-glucose 1-phosphate + ATP + H(+) = ADP-alpha-D-glucose + diphosphate</text>
        <dbReference type="Rhea" id="RHEA:12120"/>
        <dbReference type="ChEBI" id="CHEBI:15378"/>
        <dbReference type="ChEBI" id="CHEBI:30616"/>
        <dbReference type="ChEBI" id="CHEBI:33019"/>
        <dbReference type="ChEBI" id="CHEBI:57498"/>
        <dbReference type="ChEBI" id="CHEBI:58601"/>
        <dbReference type="EC" id="2.7.7.27"/>
    </reaction>
</comment>
<comment type="pathway">
    <text evidence="1">Glycan biosynthesis; glycogen biosynthesis.</text>
</comment>
<comment type="subunit">
    <text evidence="1">Homotetramer.</text>
</comment>
<comment type="similarity">
    <text evidence="1">Belongs to the bacterial/plant glucose-1-phosphate adenylyltransferase family.</text>
</comment>
<dbReference type="EC" id="2.7.7.27" evidence="1"/>
<dbReference type="EMBL" id="AE016795">
    <property type="protein sequence ID" value="AAO10517.1"/>
    <property type="molecule type" value="Genomic_DNA"/>
</dbReference>
<dbReference type="RefSeq" id="WP_011080011.1">
    <property type="nucleotide sequence ID" value="NC_004459.3"/>
</dbReference>
<dbReference type="SMR" id="Q8DAR1"/>
<dbReference type="KEGG" id="vvu:VV1_2131"/>
<dbReference type="HOGENOM" id="CLU_029499_14_1_6"/>
<dbReference type="UniPathway" id="UPA00164"/>
<dbReference type="Proteomes" id="UP000002275">
    <property type="component" value="Chromosome 1"/>
</dbReference>
<dbReference type="GO" id="GO:0005524">
    <property type="term" value="F:ATP binding"/>
    <property type="evidence" value="ECO:0007669"/>
    <property type="project" value="UniProtKB-KW"/>
</dbReference>
<dbReference type="GO" id="GO:0008878">
    <property type="term" value="F:glucose-1-phosphate adenylyltransferase activity"/>
    <property type="evidence" value="ECO:0007669"/>
    <property type="project" value="UniProtKB-UniRule"/>
</dbReference>
<dbReference type="GO" id="GO:0005978">
    <property type="term" value="P:glycogen biosynthetic process"/>
    <property type="evidence" value="ECO:0007669"/>
    <property type="project" value="UniProtKB-UniRule"/>
</dbReference>
<dbReference type="CDD" id="cd02508">
    <property type="entry name" value="ADP_Glucose_PP"/>
    <property type="match status" value="1"/>
</dbReference>
<dbReference type="CDD" id="cd04651">
    <property type="entry name" value="LbH_G1P_AT_C"/>
    <property type="match status" value="1"/>
</dbReference>
<dbReference type="Gene3D" id="2.160.10.10">
    <property type="entry name" value="Hexapeptide repeat proteins"/>
    <property type="match status" value="1"/>
</dbReference>
<dbReference type="Gene3D" id="3.90.550.10">
    <property type="entry name" value="Spore Coat Polysaccharide Biosynthesis Protein SpsA, Chain A"/>
    <property type="match status" value="1"/>
</dbReference>
<dbReference type="HAMAP" id="MF_00624">
    <property type="entry name" value="GlgC"/>
    <property type="match status" value="1"/>
</dbReference>
<dbReference type="InterPro" id="IPR011831">
    <property type="entry name" value="ADP-Glc_PPase"/>
</dbReference>
<dbReference type="InterPro" id="IPR005836">
    <property type="entry name" value="ADP_Glu_pyroP_CS"/>
</dbReference>
<dbReference type="InterPro" id="IPR023049">
    <property type="entry name" value="GlgC_bac"/>
</dbReference>
<dbReference type="InterPro" id="IPR056818">
    <property type="entry name" value="GlmU/GlgC-like_hexapep"/>
</dbReference>
<dbReference type="InterPro" id="IPR005835">
    <property type="entry name" value="NTP_transferase_dom"/>
</dbReference>
<dbReference type="InterPro" id="IPR029044">
    <property type="entry name" value="Nucleotide-diphossugar_trans"/>
</dbReference>
<dbReference type="InterPro" id="IPR011004">
    <property type="entry name" value="Trimer_LpxA-like_sf"/>
</dbReference>
<dbReference type="NCBIfam" id="TIGR02091">
    <property type="entry name" value="glgC"/>
    <property type="match status" value="1"/>
</dbReference>
<dbReference type="NCBIfam" id="NF001947">
    <property type="entry name" value="PRK00725.1"/>
    <property type="match status" value="1"/>
</dbReference>
<dbReference type="NCBIfam" id="NF002023">
    <property type="entry name" value="PRK00844.1"/>
    <property type="match status" value="1"/>
</dbReference>
<dbReference type="PANTHER" id="PTHR43523:SF2">
    <property type="entry name" value="GLUCOSE-1-PHOSPHATE ADENYLYLTRANSFERASE"/>
    <property type="match status" value="1"/>
</dbReference>
<dbReference type="PANTHER" id="PTHR43523">
    <property type="entry name" value="GLUCOSE-1-PHOSPHATE ADENYLYLTRANSFERASE-RELATED"/>
    <property type="match status" value="1"/>
</dbReference>
<dbReference type="Pfam" id="PF24894">
    <property type="entry name" value="Hexapep_GlmU"/>
    <property type="match status" value="1"/>
</dbReference>
<dbReference type="Pfam" id="PF00483">
    <property type="entry name" value="NTP_transferase"/>
    <property type="match status" value="1"/>
</dbReference>
<dbReference type="SUPFAM" id="SSF53448">
    <property type="entry name" value="Nucleotide-diphospho-sugar transferases"/>
    <property type="match status" value="1"/>
</dbReference>
<dbReference type="SUPFAM" id="SSF51161">
    <property type="entry name" value="Trimeric LpxA-like enzymes"/>
    <property type="match status" value="1"/>
</dbReference>
<dbReference type="PROSITE" id="PS00808">
    <property type="entry name" value="ADP_GLC_PYROPHOSPH_1"/>
    <property type="match status" value="1"/>
</dbReference>
<dbReference type="PROSITE" id="PS00809">
    <property type="entry name" value="ADP_GLC_PYROPHOSPH_2"/>
    <property type="match status" value="1"/>
</dbReference>
<dbReference type="PROSITE" id="PS00810">
    <property type="entry name" value="ADP_GLC_PYROPHOSPH_3"/>
    <property type="match status" value="1"/>
</dbReference>
<keyword id="KW-0067">ATP-binding</keyword>
<keyword id="KW-0119">Carbohydrate metabolism</keyword>
<keyword id="KW-0320">Glycogen biosynthesis</keyword>
<keyword id="KW-0321">Glycogen metabolism</keyword>
<keyword id="KW-0547">Nucleotide-binding</keyword>
<keyword id="KW-0548">Nucleotidyltransferase</keyword>
<keyword id="KW-0808">Transferase</keyword>
<gene>
    <name evidence="1" type="primary">glgC1</name>
    <name type="ordered locus">VV1_2131</name>
</gene>
<sequence length="405" mass="45208">MAGVLGMILAGGEGSRLRPLTESRSKPAVPFGGSYRLIDFALNNFVNADLMRIYVLTQFKSQSLFHHMKKGWNINGITDRFIDPIPAQMRTGKRWYEGTADAIYQNLRFMELSEPEQVCIFGSDHIYKMDIKQMLSFHKEKLAALTVSALRMPLAEASQFGVIEVDAEGRMVGFEEKPSAPKSIPGDPDFALVSMGNYIFEADVLFAELIEDADNENSSHDFGKDIIPKMFPRGDVFVYDFSQNRISGEKAEVYWRDVGTIDAYWQAHMDLLKTDAPFSLYNRKWPLHTYQPPLPPATFTDSDNGRVQIIDSLVCNGSYVRGSRIEKSVLGFRSNIASACDISESILLGDVKVGEGCVLRRVIVDKDVDIAPGTQIGVNLQEDKKIFHVSDDGIVVIPKGARVGY</sequence>
<feature type="chain" id="PRO_0000195348" description="Glucose-1-phosphate adenylyltransferase 1">
    <location>
        <begin position="1"/>
        <end position="405"/>
    </location>
</feature>
<feature type="binding site" evidence="1">
    <location>
        <position position="96"/>
    </location>
    <ligand>
        <name>alpha-D-glucose 1-phosphate</name>
        <dbReference type="ChEBI" id="CHEBI:58601"/>
    </ligand>
</feature>
<feature type="binding site" evidence="1">
    <location>
        <position position="161"/>
    </location>
    <ligand>
        <name>alpha-D-glucose 1-phosphate</name>
        <dbReference type="ChEBI" id="CHEBI:58601"/>
    </ligand>
</feature>
<feature type="binding site" evidence="1">
    <location>
        <begin position="176"/>
        <end position="177"/>
    </location>
    <ligand>
        <name>alpha-D-glucose 1-phosphate</name>
        <dbReference type="ChEBI" id="CHEBI:58601"/>
    </ligand>
</feature>
<feature type="binding site" evidence="1">
    <location>
        <position position="194"/>
    </location>
    <ligand>
        <name>alpha-D-glucose 1-phosphate</name>
        <dbReference type="ChEBI" id="CHEBI:58601"/>
    </ligand>
</feature>
<reference key="1">
    <citation type="submission" date="2002-12" db="EMBL/GenBank/DDBJ databases">
        <title>Complete genome sequence of Vibrio vulnificus CMCP6.</title>
        <authorList>
            <person name="Rhee J.H."/>
            <person name="Kim S.Y."/>
            <person name="Chung S.S."/>
            <person name="Kim J.J."/>
            <person name="Moon Y.H."/>
            <person name="Jeong H."/>
            <person name="Choy H.E."/>
        </authorList>
    </citation>
    <scope>NUCLEOTIDE SEQUENCE [LARGE SCALE GENOMIC DNA]</scope>
    <source>
        <strain>CMCP6</strain>
    </source>
</reference>
<protein>
    <recommendedName>
        <fullName evidence="1">Glucose-1-phosphate adenylyltransferase 1</fullName>
        <ecNumber evidence="1">2.7.7.27</ecNumber>
    </recommendedName>
    <alternativeName>
        <fullName evidence="1">ADP-glucose pyrophosphorylase 1</fullName>
        <shortName evidence="1">ADPGlc PPase 1</shortName>
    </alternativeName>
    <alternativeName>
        <fullName evidence="1">ADP-glucose synthase 1</fullName>
    </alternativeName>
</protein>
<name>GLGC1_VIBVU</name>
<proteinExistence type="inferred from homology"/>